<keyword id="KW-0175">Coiled coil</keyword>
<keyword id="KW-0238">DNA-binding</keyword>
<keyword id="KW-0539">Nucleus</keyword>
<keyword id="KW-1267">Proteomics identification</keyword>
<keyword id="KW-1185">Reference proteome</keyword>
<gene>
    <name evidence="7" type="primary">USF3</name>
    <name type="synonym">KIAA2018</name>
</gene>
<proteinExistence type="evidence at protein level"/>
<evidence type="ECO:0000255" key="1"/>
<evidence type="ECO:0000255" key="2">
    <source>
        <dbReference type="PROSITE-ProRule" id="PRU00981"/>
    </source>
</evidence>
<evidence type="ECO:0000256" key="3">
    <source>
        <dbReference type="SAM" id="MobiDB-lite"/>
    </source>
</evidence>
<evidence type="ECO:0000269" key="4">
    <source>
    </source>
</evidence>
<evidence type="ECO:0000269" key="5">
    <source>
    </source>
</evidence>
<evidence type="ECO:0000305" key="6"/>
<evidence type="ECO:0000312" key="7">
    <source>
        <dbReference type="HGNC" id="HGNC:30494"/>
    </source>
</evidence>
<accession>Q68DE3</accession>
<accession>Q7Z3L9</accession>
<accession>Q8IVF3</accession>
<accession>Q9H8T4</accession>
<sequence>MPEMTENETPTKKQHRKKNRETHNAVERHRKKKINAGINRIGELIPCSPALKQSKNMILDQAFKYITELKRQNDELLLNGGNNEQAEEIKKLRKQLEEIQKENGRYIELLKANDICLYDDPTIHWKGNLKNSKVSVVIPSDQVQKKIIVYSNGNQPGGNSQGTAVQGITFNVSHNLQKQTANVVPVQRTCNLVTPVSISGVYPSENKPWHQTTVPALATNQPVPLCLPAAISAQSILELPTSESESNVLGATSGSLIAVSIESEPHQHHSLHTCLNDQNSSENKNGQENPKVLKKMTPCVTNIPHSSSATATKVHHGNKSCLSIQDFRGDFQNTFVVSVTTTVCSQPPRTAGDSSPMSISKSADLTSTATVVASSAPGVGKATIPISTLSGNPLDNGWTLSCSLPSSSVSTSDLKNINSLTRISSAGNTQTTWTTLQLAGNTIQPLSQTPSSAVTPVLNESGTSPTTSNHSRYVATDINLNNSFPADGQPVEQVVVTLPSCPSLPMQPLIAQPQVKSQPPKNILPLNSAMQVIQMAQPVGSAVNSAPTNQNVIILQPPSTTPCPTVMRAEVSNQTVGQQIVIIQAANQNPLPLLPAPPPGSVRLPINGANTVIGSNNSVQNVPTPQTFGGKHLVHILPRPSSLSASNSTQTFSVTMSNQQPQTISLNGQLFALQPVMSSSGTTNQTPMQIIQPTTSEDPNTNVALNTFGALASLNQSISQMAGQSCVQLSISQPANSQTAANSQTTTANCVSLTTTAAPPVTTDSSATLASTYNLVSTSSMNTVACLPNMKSKRLNKKPGGRKHLAANKSACPLNSVRDVSKLDCPNTEGSAEPPCNDGLLESFPAVLPSVSVSQANSVSVSASHSLGVLSSESLIPESVSKSKSAEKSSPPSQESVTSEHFAMAAAKSKDSTPNLQQETSQDKPPSSLALSDAAKPCASANVLIPSPSDPHILVSQVPGLSSTTSTTSTDCVSEVEIIAEPCRVEQDSSDTMQTTGLLKGQGLTTLLSDLAKKKNPQKSSLSDQMDHPDFSSENPKIVDSSVNLHPKQELLLMNNDDRDPPQHHSCLPDQEVINGSLINGRQADSPMSTSSGSSRSFSVASMLPETTREDVTSNATTNTCDSCTFVEQTDIVALAARAIFDQENLEKGRVGLQADIREVASKPSEASLLEGDPPFKSQIPKESGTGQAEATPNEFNSQGSIEATMERPLEKPSCSLGIKTSNASLQDSTSQPPSITSLSVNNLIHQSSISHPLASCAGLSPTSEQTTVPATVNLTVSSSSYGSQPPGPSLMTEYSQEQLNTMTSTIPNSQIQEPLLKPSHESRKDSAKRAVQDDLLLSSAKRQKHCQPAPLRLESMSLMSRTPDTISDQTQMMVSQIPPNSSNSVVPVSNPAHGDGLTRLFPPSNNFVTPALRQTEVQCGSQPSVAEQQQTQASQHLQALQQHVPAQGVSHLHSNHLYIKQQQQQQQQQQQQQQQQQAGQLRERHHLYQMQHHVPHAESSVHSQPHNVHQQRTLQQEVQMQKKRNLVQGTQTSQLSLQPKHHGTDQSRSKTGQPHPHHQQMQQQMQQHFGSSQTEKSCENPSTSRNHHNHPQNHLNQDIMHQQQDVGSRQQGSGVSSEHVSGHNPMQRLLTSRGLEQQMVSQPSIVTRSSDMTCTPHRPERNRVSSYSAEALIGKTSSNSEQRMGISIQGSRVSDQLEMRSYLDVPRNKSLAIHNMQGRVDHTVASDIRLSDCQTFKPSGASQQPQSNFEVQSSRNNEIGNPVSSLRSMQSQAFRISQNTGPPPIDRQKRLSYPPVQSIPTGNGIPSRDSENTCHQSFMQSLLAPHLSDQVIGSQRSLSEHQRNTQCGPSSAIEYNCPPTHENVHIRRESESQNRESCDMSLGAINTRNSTLNIPFSSSSSSGDIQGRNTSPNVSVQKSNPMRITESHATKGHMNPPVTTNMHGVARPALPHPSVSHGNGDQGPAVRQANSSVPQRSRHPLQDSSGSKIRQPERNRSGNQRQSTVFDPSLPHLPLSTGGSMILGRQQPATEKRGSIVRFMPDSPQVPNDNSGPDQHTLSQNFGFSFIPEGGMNPPINANASFIPQVTQPSATRTPALIPVDPQNTLPSFYPPYSPAHPTLSNDISIPYFPNQMFSNPSTEKVNSGSLNNRFGSILSPPRPVGFAQPSFPLLPDMPPMHMTNSHLSNFNMTSLFPEIATALPDGSAMSPLLTIANSSASDSSKQSSNRPAHNISHILGHDCSSAV</sequence>
<name>USF3_HUMAN</name>
<comment type="function">
    <text evidence="5">Involved in the negative regulation of epithelial-mesenchymal transition, the process by which epithelial cells lose their polarity and adhesion properties to become mesenchymal cells with enhanced migration and invasive properties.</text>
</comment>
<comment type="subcellular location">
    <subcellularLocation>
        <location evidence="2">Nucleus</location>
    </subcellularLocation>
</comment>
<comment type="sequence caution" evidence="6">
    <conflict type="miscellaneous discrepancy">
        <sequence resource="EMBL-CDS" id="BAB14518"/>
    </conflict>
    <text>Chimeric cDNA.</text>
</comment>
<comment type="sequence caution" evidence="6">
    <conflict type="erroneous initiation">
        <sequence resource="EMBL-CDS" id="CAH18277"/>
    </conflict>
    <text>Truncated N-terminus.</text>
</comment>
<dbReference type="EMBL" id="AC055740">
    <property type="status" value="NOT_ANNOTATED_CDS"/>
    <property type="molecule type" value="Genomic_DNA"/>
</dbReference>
<dbReference type="EMBL" id="BX537728">
    <property type="protein sequence ID" value="CAD97821.1"/>
    <property type="molecule type" value="mRNA"/>
</dbReference>
<dbReference type="EMBL" id="CR749439">
    <property type="protein sequence ID" value="CAH18277.1"/>
    <property type="status" value="ALT_INIT"/>
    <property type="molecule type" value="mRNA"/>
</dbReference>
<dbReference type="EMBL" id="AB095938">
    <property type="protein sequence ID" value="BAC23114.1"/>
    <property type="molecule type" value="mRNA"/>
</dbReference>
<dbReference type="EMBL" id="AK023308">
    <property type="protein sequence ID" value="BAB14518.1"/>
    <property type="status" value="ALT_SEQ"/>
    <property type="molecule type" value="mRNA"/>
</dbReference>
<dbReference type="CCDS" id="CCDS43133.1"/>
<dbReference type="RefSeq" id="NP_001009899.3">
    <property type="nucleotide sequence ID" value="NM_001009899.4"/>
</dbReference>
<dbReference type="RefSeq" id="XP_016861360.1">
    <property type="nucleotide sequence ID" value="XM_017005871.2"/>
</dbReference>
<dbReference type="SMR" id="Q68DE3"/>
<dbReference type="FunCoup" id="Q68DE3">
    <property type="interactions" value="615"/>
</dbReference>
<dbReference type="IntAct" id="Q68DE3">
    <property type="interactions" value="16"/>
</dbReference>
<dbReference type="STRING" id="9606.ENSP00000320794"/>
<dbReference type="CAZy" id="GH47">
    <property type="family name" value="Glycoside Hydrolase Family 47"/>
</dbReference>
<dbReference type="GlyGen" id="Q68DE3">
    <property type="glycosylation" value="7 sites, 1 O-linked glycan (5 sites)"/>
</dbReference>
<dbReference type="iPTMnet" id="Q68DE3"/>
<dbReference type="PhosphoSitePlus" id="Q68DE3"/>
<dbReference type="BioMuta" id="USF3"/>
<dbReference type="DMDM" id="298286912"/>
<dbReference type="jPOST" id="Q68DE3"/>
<dbReference type="MassIVE" id="Q68DE3"/>
<dbReference type="PaxDb" id="9606-ENSP00000320794"/>
<dbReference type="PeptideAtlas" id="Q68DE3"/>
<dbReference type="ProteomicsDB" id="66078"/>
<dbReference type="Antibodypedia" id="32593">
    <property type="antibodies" value="16 antibodies from 7 providers"/>
</dbReference>
<dbReference type="DNASU" id="205717"/>
<dbReference type="Ensembl" id="ENST00000316407.9">
    <property type="protein sequence ID" value="ENSP00000320794.4"/>
    <property type="gene ID" value="ENSG00000176542.10"/>
</dbReference>
<dbReference type="Ensembl" id="ENST00000478658.1">
    <property type="protein sequence ID" value="ENSP00000420721.1"/>
    <property type="gene ID" value="ENSG00000176542.10"/>
</dbReference>
<dbReference type="GeneID" id="205717"/>
<dbReference type="KEGG" id="hsa:205717"/>
<dbReference type="MANE-Select" id="ENST00000316407.9">
    <property type="protein sequence ID" value="ENSP00000320794.4"/>
    <property type="RefSeq nucleotide sequence ID" value="NM_001009899.4"/>
    <property type="RefSeq protein sequence ID" value="NP_001009899.3"/>
</dbReference>
<dbReference type="UCSC" id="uc003eam.4">
    <property type="organism name" value="human"/>
</dbReference>
<dbReference type="AGR" id="HGNC:30494"/>
<dbReference type="CTD" id="205717"/>
<dbReference type="DisGeNET" id="205717"/>
<dbReference type="GeneCards" id="USF3"/>
<dbReference type="HGNC" id="HGNC:30494">
    <property type="gene designation" value="USF3"/>
</dbReference>
<dbReference type="HPA" id="ENSG00000176542">
    <property type="expression patterns" value="Low tissue specificity"/>
</dbReference>
<dbReference type="MalaCards" id="USF3"/>
<dbReference type="MIM" id="617568">
    <property type="type" value="gene"/>
</dbReference>
<dbReference type="neXtProt" id="NX_Q68DE3"/>
<dbReference type="OpenTargets" id="ENSG00000176542"/>
<dbReference type="Orphanet" id="201">
    <property type="disease" value="Cowden syndrome"/>
</dbReference>
<dbReference type="PharmGKB" id="PA142671594"/>
<dbReference type="VEuPathDB" id="HostDB:ENSG00000176542"/>
<dbReference type="eggNOG" id="ENOG502QVK9">
    <property type="taxonomic scope" value="Eukaryota"/>
</dbReference>
<dbReference type="GeneTree" id="ENSGT00390000015759"/>
<dbReference type="HOGENOM" id="CLU_001249_0_0_1"/>
<dbReference type="InParanoid" id="Q68DE3"/>
<dbReference type="OMA" id="CVPDQEV"/>
<dbReference type="OrthoDB" id="690068at2759"/>
<dbReference type="PAN-GO" id="Q68DE3">
    <property type="GO annotations" value="0 GO annotations based on evolutionary models"/>
</dbReference>
<dbReference type="PhylomeDB" id="Q68DE3"/>
<dbReference type="TreeFam" id="TF332661"/>
<dbReference type="PathwayCommons" id="Q68DE3"/>
<dbReference type="SignaLink" id="Q68DE3"/>
<dbReference type="ChiTaRS" id="USF3">
    <property type="organism name" value="human"/>
</dbReference>
<dbReference type="Pharos" id="Q68DE3">
    <property type="development level" value="Tdark"/>
</dbReference>
<dbReference type="PRO" id="PR:Q68DE3"/>
<dbReference type="Proteomes" id="UP000005640">
    <property type="component" value="Chromosome 3"/>
</dbReference>
<dbReference type="RNAct" id="Q68DE3">
    <property type="molecule type" value="protein"/>
</dbReference>
<dbReference type="Bgee" id="ENSG00000176542">
    <property type="expression patterns" value="Expressed in kidney epithelium and 192 other cell types or tissues"/>
</dbReference>
<dbReference type="ExpressionAtlas" id="Q68DE3">
    <property type="expression patterns" value="baseline and differential"/>
</dbReference>
<dbReference type="GO" id="GO:0005634">
    <property type="term" value="C:nucleus"/>
    <property type="evidence" value="ECO:0007669"/>
    <property type="project" value="UniProtKB-SubCell"/>
</dbReference>
<dbReference type="GO" id="GO:0001228">
    <property type="term" value="F:DNA-binding transcription activator activity, RNA polymerase II-specific"/>
    <property type="evidence" value="ECO:0000314"/>
    <property type="project" value="ARUK-UCL"/>
</dbReference>
<dbReference type="GO" id="GO:0046983">
    <property type="term" value="F:protein dimerization activity"/>
    <property type="evidence" value="ECO:0007669"/>
    <property type="project" value="InterPro"/>
</dbReference>
<dbReference type="GO" id="GO:0000977">
    <property type="term" value="F:RNA polymerase II transcription regulatory region sequence-specific DNA binding"/>
    <property type="evidence" value="ECO:0000314"/>
    <property type="project" value="ARUK-UCL"/>
</dbReference>
<dbReference type="GO" id="GO:0010719">
    <property type="term" value="P:negative regulation of epithelial to mesenchymal transition"/>
    <property type="evidence" value="ECO:0000315"/>
    <property type="project" value="UniProtKB"/>
</dbReference>
<dbReference type="GO" id="GO:0045944">
    <property type="term" value="P:positive regulation of transcription by RNA polymerase II"/>
    <property type="evidence" value="ECO:0000314"/>
    <property type="project" value="ARUK-UCL"/>
</dbReference>
<dbReference type="CDD" id="cd18910">
    <property type="entry name" value="bHLHzip_USF3"/>
    <property type="match status" value="1"/>
</dbReference>
<dbReference type="FunFam" id="4.10.280.10:FF:000051">
    <property type="entry name" value="Basic helix-loop-helix domain-containing protein KIAA2018"/>
    <property type="match status" value="1"/>
</dbReference>
<dbReference type="Gene3D" id="4.10.280.10">
    <property type="entry name" value="Helix-loop-helix DNA-binding domain"/>
    <property type="match status" value="1"/>
</dbReference>
<dbReference type="InterPro" id="IPR011598">
    <property type="entry name" value="bHLH_dom"/>
</dbReference>
<dbReference type="InterPro" id="IPR053252">
    <property type="entry name" value="EMT_regulator"/>
</dbReference>
<dbReference type="InterPro" id="IPR036638">
    <property type="entry name" value="HLH_DNA-bd_sf"/>
</dbReference>
<dbReference type="InterPro" id="IPR048064">
    <property type="entry name" value="USF3_bHLH"/>
</dbReference>
<dbReference type="PANTHER" id="PTHR46970">
    <property type="entry name" value="BASIC HELIX-LOOP-HELIX DOMAIN-CONTAINING PROTEIN USF3"/>
    <property type="match status" value="1"/>
</dbReference>
<dbReference type="PANTHER" id="PTHR46970:SF1">
    <property type="entry name" value="BASIC HELIX-LOOP-HELIX DOMAIN-CONTAINING PROTEIN USF3"/>
    <property type="match status" value="1"/>
</dbReference>
<dbReference type="Pfam" id="PF00010">
    <property type="entry name" value="HLH"/>
    <property type="match status" value="1"/>
</dbReference>
<dbReference type="SMART" id="SM00353">
    <property type="entry name" value="HLH"/>
    <property type="match status" value="1"/>
</dbReference>
<dbReference type="SUPFAM" id="SSF47459">
    <property type="entry name" value="HLH, helix-loop-helix DNA-binding domain"/>
    <property type="match status" value="1"/>
</dbReference>
<dbReference type="PROSITE" id="PS50888">
    <property type="entry name" value="BHLH"/>
    <property type="match status" value="1"/>
</dbReference>
<organism>
    <name type="scientific">Homo sapiens</name>
    <name type="common">Human</name>
    <dbReference type="NCBI Taxonomy" id="9606"/>
    <lineage>
        <taxon>Eukaryota</taxon>
        <taxon>Metazoa</taxon>
        <taxon>Chordata</taxon>
        <taxon>Craniata</taxon>
        <taxon>Vertebrata</taxon>
        <taxon>Euteleostomi</taxon>
        <taxon>Mammalia</taxon>
        <taxon>Eutheria</taxon>
        <taxon>Euarchontoglires</taxon>
        <taxon>Primates</taxon>
        <taxon>Haplorrhini</taxon>
        <taxon>Catarrhini</taxon>
        <taxon>Hominidae</taxon>
        <taxon>Homo</taxon>
    </lineage>
</organism>
<feature type="chain" id="PRO_0000295754" description="Basic helix-loop-helix domain-containing protein USF3">
    <location>
        <begin position="1"/>
        <end position="2245"/>
    </location>
</feature>
<feature type="domain" description="bHLH" evidence="2">
    <location>
        <begin position="18"/>
        <end position="69"/>
    </location>
</feature>
<feature type="region of interest" description="Disordered" evidence="3">
    <location>
        <begin position="1"/>
        <end position="28"/>
    </location>
</feature>
<feature type="region of interest" description="Disordered" evidence="3">
    <location>
        <begin position="271"/>
        <end position="290"/>
    </location>
</feature>
<feature type="region of interest" description="Disordered" evidence="3">
    <location>
        <begin position="447"/>
        <end position="470"/>
    </location>
</feature>
<feature type="region of interest" description="Disordered" evidence="3">
    <location>
        <begin position="881"/>
        <end position="900"/>
    </location>
</feature>
<feature type="region of interest" description="Disordered" evidence="3">
    <location>
        <begin position="906"/>
        <end position="933"/>
    </location>
</feature>
<feature type="region of interest" description="Disordered" evidence="3">
    <location>
        <begin position="1015"/>
        <end position="1041"/>
    </location>
</feature>
<feature type="region of interest" description="Disordered" evidence="3">
    <location>
        <begin position="1164"/>
        <end position="1238"/>
    </location>
</feature>
<feature type="region of interest" description="Disordered" evidence="3">
    <location>
        <begin position="1307"/>
        <end position="1331"/>
    </location>
</feature>
<feature type="region of interest" description="Disordered" evidence="3">
    <location>
        <begin position="1460"/>
        <end position="1624"/>
    </location>
</feature>
<feature type="region of interest" description="Disordered" evidence="3">
    <location>
        <begin position="1636"/>
        <end position="1664"/>
    </location>
</feature>
<feature type="region of interest" description="Disordered" evidence="3">
    <location>
        <begin position="1736"/>
        <end position="1764"/>
    </location>
</feature>
<feature type="region of interest" description="Disordered" evidence="3">
    <location>
        <begin position="1777"/>
        <end position="1815"/>
    </location>
</feature>
<feature type="region of interest" description="Disordered" evidence="3">
    <location>
        <begin position="1834"/>
        <end position="1859"/>
    </location>
</feature>
<feature type="region of interest" description="Disordered" evidence="3">
    <location>
        <begin position="1891"/>
        <end position="2031"/>
    </location>
</feature>
<feature type="coiled-coil region" evidence="1">
    <location>
        <begin position="77"/>
        <end position="112"/>
    </location>
</feature>
<feature type="compositionally biased region" description="Polar residues" evidence="3">
    <location>
        <begin position="273"/>
        <end position="288"/>
    </location>
</feature>
<feature type="compositionally biased region" description="Low complexity" evidence="3">
    <location>
        <begin position="881"/>
        <end position="896"/>
    </location>
</feature>
<feature type="compositionally biased region" description="Polar residues" evidence="3">
    <location>
        <begin position="912"/>
        <end position="925"/>
    </location>
</feature>
<feature type="compositionally biased region" description="Polar residues" evidence="3">
    <location>
        <begin position="1185"/>
        <end position="1202"/>
    </location>
</feature>
<feature type="compositionally biased region" description="Polar residues" evidence="3">
    <location>
        <begin position="1219"/>
        <end position="1238"/>
    </location>
</feature>
<feature type="compositionally biased region" description="Basic and acidic residues" evidence="3">
    <location>
        <begin position="1319"/>
        <end position="1331"/>
    </location>
</feature>
<feature type="compositionally biased region" description="Low complexity" evidence="3">
    <location>
        <begin position="1462"/>
        <end position="1478"/>
    </location>
</feature>
<feature type="compositionally biased region" description="Polar residues" evidence="3">
    <location>
        <begin position="1501"/>
        <end position="1520"/>
    </location>
</feature>
<feature type="compositionally biased region" description="Polar residues" evidence="3">
    <location>
        <begin position="1528"/>
        <end position="1538"/>
    </location>
</feature>
<feature type="compositionally biased region" description="Low complexity" evidence="3">
    <location>
        <begin position="1560"/>
        <end position="1569"/>
    </location>
</feature>
<feature type="compositionally biased region" description="Polar residues" evidence="3">
    <location>
        <begin position="1570"/>
        <end position="1585"/>
    </location>
</feature>
<feature type="compositionally biased region" description="Low complexity" evidence="3">
    <location>
        <begin position="1593"/>
        <end position="1624"/>
    </location>
</feature>
<feature type="compositionally biased region" description="Polar residues" evidence="3">
    <location>
        <begin position="1636"/>
        <end position="1654"/>
    </location>
</feature>
<feature type="compositionally biased region" description="Polar residues" evidence="3">
    <location>
        <begin position="1904"/>
        <end position="1923"/>
    </location>
</feature>
<feature type="compositionally biased region" description="Polar residues" evidence="3">
    <location>
        <begin position="1998"/>
        <end position="2007"/>
    </location>
</feature>
<feature type="sequence variant" id="VAR_033363" description="In dbSNP:rs9866806." evidence="4">
    <original>P</original>
    <variation>A</variation>
    <location>
        <position position="222"/>
    </location>
</feature>
<feature type="sequence variant" id="VAR_055949" description="In dbSNP:rs9852318.">
    <original>A</original>
    <variation>E</variation>
    <location>
        <position position="907"/>
    </location>
</feature>
<feature type="sequence variant" id="VAR_055950" description="In dbSNP:rs6770105.">
    <original>V</original>
    <variation>G</variation>
    <location>
        <position position="943"/>
    </location>
</feature>
<feature type="sequence variant" id="VAR_080041" description="Rare variant; may be a risk factor for epithelial thyroid carcinoma; results in increased epithelial-mesenchimal transition when coexpressed with Q-1472 del." evidence="5">
    <location>
        <begin position="1470"/>
        <end position="1472"/>
    </location>
</feature>
<feature type="sequence variant" id="VAR_080042" description="Rare variant; may be a risk factor for epithelial thyroid carcinoma; results in increased epithelial-mesenchimal transition when coexpressed with 1470-Q--Q-1472 del." evidence="5">
    <location>
        <position position="1472"/>
    </location>
</feature>
<feature type="sequence variant" id="VAR_033364" description="In dbSNP:rs2290477.">
    <original>A</original>
    <variation>V</variation>
    <location>
        <position position="1966"/>
    </location>
</feature>
<feature type="sequence variant" id="VAR_063263" description="In dbSNP:rs930818.">
    <original>A</original>
    <variation>V</variation>
    <location>
        <position position="2200"/>
    </location>
</feature>
<feature type="sequence conflict" description="In Ref. 2; CAH18277." evidence="6" ref="2">
    <original>R</original>
    <variation>G</variation>
    <location>
        <position position="328"/>
    </location>
</feature>
<feature type="sequence conflict" description="In Ref. 2; CAH18277." evidence="6" ref="2">
    <original>S</original>
    <variation>P</variation>
    <location>
        <position position="862"/>
    </location>
</feature>
<feature type="sequence conflict" description="In Ref. 2; CAH18277." evidence="6" ref="2">
    <location>
        <begin position="1462"/>
        <end position="1464"/>
    </location>
</feature>
<feature type="sequence conflict" description="In Ref. 3; BAC23114." evidence="6" ref="3">
    <location>
        <position position="1462"/>
    </location>
</feature>
<feature type="sequence conflict" description="In Ref. 2; CAD97821." evidence="6" ref="2">
    <original>H</original>
    <variation>R</variation>
    <location>
        <position position="1953"/>
    </location>
</feature>
<feature type="sequence conflict" description="In Ref. 4; BAB14518." evidence="6" ref="4">
    <original>P</original>
    <variation>S</variation>
    <location>
        <position position="2015"/>
    </location>
</feature>
<reference key="1">
    <citation type="journal article" date="2006" name="Nature">
        <title>The DNA sequence, annotation and analysis of human chromosome 3.</title>
        <authorList>
            <person name="Muzny D.M."/>
            <person name="Scherer S.E."/>
            <person name="Kaul R."/>
            <person name="Wang J."/>
            <person name="Yu J."/>
            <person name="Sudbrak R."/>
            <person name="Buhay C.J."/>
            <person name="Chen R."/>
            <person name="Cree A."/>
            <person name="Ding Y."/>
            <person name="Dugan-Rocha S."/>
            <person name="Gill R."/>
            <person name="Gunaratne P."/>
            <person name="Harris R.A."/>
            <person name="Hawes A.C."/>
            <person name="Hernandez J."/>
            <person name="Hodgson A.V."/>
            <person name="Hume J."/>
            <person name="Jackson A."/>
            <person name="Khan Z.M."/>
            <person name="Kovar-Smith C."/>
            <person name="Lewis L.R."/>
            <person name="Lozado R.J."/>
            <person name="Metzker M.L."/>
            <person name="Milosavljevic A."/>
            <person name="Miner G.R."/>
            <person name="Morgan M.B."/>
            <person name="Nazareth L.V."/>
            <person name="Scott G."/>
            <person name="Sodergren E."/>
            <person name="Song X.-Z."/>
            <person name="Steffen D."/>
            <person name="Wei S."/>
            <person name="Wheeler D.A."/>
            <person name="Wright M.W."/>
            <person name="Worley K.C."/>
            <person name="Yuan Y."/>
            <person name="Zhang Z."/>
            <person name="Adams C.Q."/>
            <person name="Ansari-Lari M.A."/>
            <person name="Ayele M."/>
            <person name="Brown M.J."/>
            <person name="Chen G."/>
            <person name="Chen Z."/>
            <person name="Clendenning J."/>
            <person name="Clerc-Blankenburg K.P."/>
            <person name="Chen R."/>
            <person name="Chen Z."/>
            <person name="Davis C."/>
            <person name="Delgado O."/>
            <person name="Dinh H.H."/>
            <person name="Dong W."/>
            <person name="Draper H."/>
            <person name="Ernst S."/>
            <person name="Fu G."/>
            <person name="Gonzalez-Garay M.L."/>
            <person name="Garcia D.K."/>
            <person name="Gillett W."/>
            <person name="Gu J."/>
            <person name="Hao B."/>
            <person name="Haugen E."/>
            <person name="Havlak P."/>
            <person name="He X."/>
            <person name="Hennig S."/>
            <person name="Hu S."/>
            <person name="Huang W."/>
            <person name="Jackson L.R."/>
            <person name="Jacob L.S."/>
            <person name="Kelly S.H."/>
            <person name="Kube M."/>
            <person name="Levy R."/>
            <person name="Li Z."/>
            <person name="Liu B."/>
            <person name="Liu J."/>
            <person name="Liu W."/>
            <person name="Lu J."/>
            <person name="Maheshwari M."/>
            <person name="Nguyen B.-V."/>
            <person name="Okwuonu G.O."/>
            <person name="Palmeiri A."/>
            <person name="Pasternak S."/>
            <person name="Perez L.M."/>
            <person name="Phelps K.A."/>
            <person name="Plopper F.J."/>
            <person name="Qiang B."/>
            <person name="Raymond C."/>
            <person name="Rodriguez R."/>
            <person name="Saenphimmachak C."/>
            <person name="Santibanez J."/>
            <person name="Shen H."/>
            <person name="Shen Y."/>
            <person name="Subramanian S."/>
            <person name="Tabor P.E."/>
            <person name="Verduzco D."/>
            <person name="Waldron L."/>
            <person name="Wang J."/>
            <person name="Wang J."/>
            <person name="Wang Q."/>
            <person name="Williams G.A."/>
            <person name="Wong G.K.-S."/>
            <person name="Yao Z."/>
            <person name="Zhang J."/>
            <person name="Zhang X."/>
            <person name="Zhao G."/>
            <person name="Zhou J."/>
            <person name="Zhou Y."/>
            <person name="Nelson D."/>
            <person name="Lehrach H."/>
            <person name="Reinhardt R."/>
            <person name="Naylor S.L."/>
            <person name="Yang H."/>
            <person name="Olson M."/>
            <person name="Weinstock G."/>
            <person name="Gibbs R.A."/>
        </authorList>
    </citation>
    <scope>NUCLEOTIDE SEQUENCE [LARGE SCALE GENOMIC DNA]</scope>
</reference>
<reference key="2">
    <citation type="journal article" date="2007" name="BMC Genomics">
        <title>The full-ORF clone resource of the German cDNA consortium.</title>
        <authorList>
            <person name="Bechtel S."/>
            <person name="Rosenfelder H."/>
            <person name="Duda A."/>
            <person name="Schmidt C.P."/>
            <person name="Ernst U."/>
            <person name="Wellenreuther R."/>
            <person name="Mehrle A."/>
            <person name="Schuster C."/>
            <person name="Bahr A."/>
            <person name="Bloecker H."/>
            <person name="Heubner D."/>
            <person name="Hoerlein A."/>
            <person name="Michel G."/>
            <person name="Wedler H."/>
            <person name="Koehrer K."/>
            <person name="Ottenwaelder B."/>
            <person name="Poustka A."/>
            <person name="Wiemann S."/>
            <person name="Schupp I."/>
        </authorList>
    </citation>
    <scope>NUCLEOTIDE SEQUENCE [LARGE SCALE MRNA] OF 26-2245</scope>
    <scope>VARIANT ALA-222</scope>
    <source>
        <tissue>Retina</tissue>
    </source>
</reference>
<reference key="3">
    <citation type="submission" date="2002-11" db="EMBL/GenBank/DDBJ databases">
        <title>The nucleotide sequence of a long cDNA clone isolated from human.</title>
        <authorList>
            <person name="Nagase T."/>
            <person name="Kikuno R."/>
            <person name="Ohara O."/>
        </authorList>
    </citation>
    <scope>NUCLEOTIDE SEQUENCE [LARGE SCALE MRNA] OF 560-2245</scope>
    <source>
        <tissue>Brain</tissue>
    </source>
</reference>
<reference key="4">
    <citation type="journal article" date="2004" name="Nat. Genet.">
        <title>Complete sequencing and characterization of 21,243 full-length human cDNAs.</title>
        <authorList>
            <person name="Ota T."/>
            <person name="Suzuki Y."/>
            <person name="Nishikawa T."/>
            <person name="Otsuki T."/>
            <person name="Sugiyama T."/>
            <person name="Irie R."/>
            <person name="Wakamatsu A."/>
            <person name="Hayashi K."/>
            <person name="Sato H."/>
            <person name="Nagai K."/>
            <person name="Kimura K."/>
            <person name="Makita H."/>
            <person name="Sekine M."/>
            <person name="Obayashi M."/>
            <person name="Nishi T."/>
            <person name="Shibahara T."/>
            <person name="Tanaka T."/>
            <person name="Ishii S."/>
            <person name="Yamamoto J."/>
            <person name="Saito K."/>
            <person name="Kawai Y."/>
            <person name="Isono Y."/>
            <person name="Nakamura Y."/>
            <person name="Nagahari K."/>
            <person name="Murakami K."/>
            <person name="Yasuda T."/>
            <person name="Iwayanagi T."/>
            <person name="Wagatsuma M."/>
            <person name="Shiratori A."/>
            <person name="Sudo H."/>
            <person name="Hosoiri T."/>
            <person name="Kaku Y."/>
            <person name="Kodaira H."/>
            <person name="Kondo H."/>
            <person name="Sugawara M."/>
            <person name="Takahashi M."/>
            <person name="Kanda K."/>
            <person name="Yokoi T."/>
            <person name="Furuya T."/>
            <person name="Kikkawa E."/>
            <person name="Omura Y."/>
            <person name="Abe K."/>
            <person name="Kamihara K."/>
            <person name="Katsuta N."/>
            <person name="Sato K."/>
            <person name="Tanikawa M."/>
            <person name="Yamazaki M."/>
            <person name="Ninomiya K."/>
            <person name="Ishibashi T."/>
            <person name="Yamashita H."/>
            <person name="Murakawa K."/>
            <person name="Fujimori K."/>
            <person name="Tanai H."/>
            <person name="Kimata M."/>
            <person name="Watanabe M."/>
            <person name="Hiraoka S."/>
            <person name="Chiba Y."/>
            <person name="Ishida S."/>
            <person name="Ono Y."/>
            <person name="Takiguchi S."/>
            <person name="Watanabe S."/>
            <person name="Yosida M."/>
            <person name="Hotuta T."/>
            <person name="Kusano J."/>
            <person name="Kanehori K."/>
            <person name="Takahashi-Fujii A."/>
            <person name="Hara H."/>
            <person name="Tanase T.-O."/>
            <person name="Nomura Y."/>
            <person name="Togiya S."/>
            <person name="Komai F."/>
            <person name="Hara R."/>
            <person name="Takeuchi K."/>
            <person name="Arita M."/>
            <person name="Imose N."/>
            <person name="Musashino K."/>
            <person name="Yuuki H."/>
            <person name="Oshima A."/>
            <person name="Sasaki N."/>
            <person name="Aotsuka S."/>
            <person name="Yoshikawa Y."/>
            <person name="Matsunawa H."/>
            <person name="Ichihara T."/>
            <person name="Shiohata N."/>
            <person name="Sano S."/>
            <person name="Moriya S."/>
            <person name="Momiyama H."/>
            <person name="Satoh N."/>
            <person name="Takami S."/>
            <person name="Terashima Y."/>
            <person name="Suzuki O."/>
            <person name="Nakagawa S."/>
            <person name="Senoh A."/>
            <person name="Mizoguchi H."/>
            <person name="Goto Y."/>
            <person name="Shimizu F."/>
            <person name="Wakebe H."/>
            <person name="Hishigaki H."/>
            <person name="Watanabe T."/>
            <person name="Sugiyama A."/>
            <person name="Takemoto M."/>
            <person name="Kawakami B."/>
            <person name="Yamazaki M."/>
            <person name="Watanabe K."/>
            <person name="Kumagai A."/>
            <person name="Itakura S."/>
            <person name="Fukuzumi Y."/>
            <person name="Fujimori Y."/>
            <person name="Komiyama M."/>
            <person name="Tashiro H."/>
            <person name="Tanigami A."/>
            <person name="Fujiwara T."/>
            <person name="Ono T."/>
            <person name="Yamada K."/>
            <person name="Fujii Y."/>
            <person name="Ozaki K."/>
            <person name="Hirao M."/>
            <person name="Ohmori Y."/>
            <person name="Kawabata A."/>
            <person name="Hikiji T."/>
            <person name="Kobatake N."/>
            <person name="Inagaki H."/>
            <person name="Ikema Y."/>
            <person name="Okamoto S."/>
            <person name="Okitani R."/>
            <person name="Kawakami T."/>
            <person name="Noguchi S."/>
            <person name="Itoh T."/>
            <person name="Shigeta K."/>
            <person name="Senba T."/>
            <person name="Matsumura K."/>
            <person name="Nakajima Y."/>
            <person name="Mizuno T."/>
            <person name="Morinaga M."/>
            <person name="Sasaki M."/>
            <person name="Togashi T."/>
            <person name="Oyama M."/>
            <person name="Hata H."/>
            <person name="Watanabe M."/>
            <person name="Komatsu T."/>
            <person name="Mizushima-Sugano J."/>
            <person name="Satoh T."/>
            <person name="Shirai Y."/>
            <person name="Takahashi Y."/>
            <person name="Nakagawa K."/>
            <person name="Okumura K."/>
            <person name="Nagase T."/>
            <person name="Nomura N."/>
            <person name="Kikuchi H."/>
            <person name="Masuho Y."/>
            <person name="Yamashita R."/>
            <person name="Nakai K."/>
            <person name="Yada T."/>
            <person name="Nakamura Y."/>
            <person name="Ohara O."/>
            <person name="Isogai T."/>
            <person name="Sugano S."/>
        </authorList>
    </citation>
    <scope>NUCLEOTIDE SEQUENCE [LARGE SCALE MRNA] OF 1766-2085</scope>
    <source>
        <tissue>Ovary</tissue>
    </source>
</reference>
<reference key="5">
    <citation type="journal article" date="2008" name="Proc. Natl. Acad. Sci. U.S.A.">
        <title>A quantitative atlas of mitotic phosphorylation.</title>
        <authorList>
            <person name="Dephoure N."/>
            <person name="Zhou C."/>
            <person name="Villen J."/>
            <person name="Beausoleil S.A."/>
            <person name="Bakalarski C.E."/>
            <person name="Elledge S.J."/>
            <person name="Gygi S.P."/>
        </authorList>
    </citation>
    <scope>IDENTIFICATION BY MASS SPECTROMETRY [LARGE SCALE ANALYSIS]</scope>
    <source>
        <tissue>Cervix carcinoma</tissue>
    </source>
</reference>
<reference key="6">
    <citation type="journal article" date="2017" name="Hum. Mol. Genet.">
        <title>Germline compound heterozygous poly-glutamine deletion in USF3 may be involved in predisposition to heritable and sporadic epithelial thyroid carcinoma.</title>
        <authorList>
            <person name="Ni Y."/>
            <person name="Seballos S."/>
            <person name="Fletcher B."/>
            <person name="Romigh T."/>
            <person name="Yehia L."/>
            <person name="Mester J."/>
            <person name="Senter L."/>
            <person name="Niazi F."/>
            <person name="Saji M."/>
            <person name="Ringel M.D."/>
            <person name="LaFramboise T."/>
            <person name="Eng C."/>
        </authorList>
    </citation>
    <scope>FUNCTION</scope>
    <scope>VARIANTS 1470-GLN--GLN-1472 DEL AND GLN-1472 DEL</scope>
    <scope>CHARACTERIZATION OF VARIANTS 1470-GLN--GLN-1472 DEL AND GLN-1472 DEL</scope>
</reference>
<protein>
    <recommendedName>
        <fullName evidence="6">Basic helix-loop-helix domain-containing protein USF3</fullName>
    </recommendedName>
    <alternativeName>
        <fullName>Upstream transcription factor 3</fullName>
    </alternativeName>
</protein>